<comment type="function">
    <text evidence="1">Involved in signal transduction through the Wnt pathway. Promotes beta-catenin's transcriptional activity (By similarity).</text>
</comment>
<comment type="subunit">
    <text evidence="1">Binds to beta-catenin (CTNNB1), PYGO1 and PYGO2; the interaction with PYGO1 increases PYGO1 affinity to histone H3 methylated at 'Lys 4'.</text>
</comment>
<comment type="subcellular location">
    <subcellularLocation>
        <location evidence="1">Nucleus</location>
    </subcellularLocation>
</comment>
<comment type="similarity">
    <text evidence="3">Belongs to the BCL9 family.</text>
</comment>
<keyword id="KW-0539">Nucleus</keyword>
<keyword id="KW-1185">Reference proteome</keyword>
<keyword id="KW-0879">Wnt signaling pathway</keyword>
<protein>
    <recommendedName>
        <fullName>B-cell CLL/lymphoma 9 protein</fullName>
        <shortName>B-cell lymphoma 9 protein</shortName>
        <shortName>Bcl-9</shortName>
    </recommendedName>
</protein>
<evidence type="ECO:0000250" key="1"/>
<evidence type="ECO:0000256" key="2">
    <source>
        <dbReference type="SAM" id="MobiDB-lite"/>
    </source>
</evidence>
<evidence type="ECO:0000305" key="3"/>
<proteinExistence type="inferred from homology"/>
<feature type="chain" id="PRO_0000064887" description="B-cell CLL/lymphoma 9 protein">
    <location>
        <begin position="1" status="less than"/>
        <end position="130" status="greater than"/>
    </location>
</feature>
<feature type="region of interest" description="Disordered" evidence="2">
    <location>
        <begin position="1"/>
        <end position="130"/>
    </location>
</feature>
<feature type="compositionally biased region" description="Polar residues" evidence="2">
    <location>
        <begin position="1"/>
        <end position="16"/>
    </location>
</feature>
<feature type="compositionally biased region" description="Pro residues" evidence="2">
    <location>
        <begin position="62"/>
        <end position="73"/>
    </location>
</feature>
<feature type="compositionally biased region" description="Gly residues" evidence="2">
    <location>
        <begin position="80"/>
        <end position="98"/>
    </location>
</feature>
<feature type="non-terminal residue">
    <location>
        <position position="1"/>
    </location>
</feature>
<feature type="non-terminal residue">
    <location>
        <position position="130"/>
    </location>
</feature>
<sequence>PMGMTQPLSHSNQMPSPNAMGPNIPPHGVPMGPGLMSHNPIMGHGSQEPPMVPQGRMGFPQGFPPVQSPPQQVPFPHNGPSGGQGNFPGGMGFPGEGPLGRPSNLPQSSADAALCKPGGPGGPDSFAVLG</sequence>
<gene>
    <name type="primary">BCL9</name>
</gene>
<name>BCL9_PIG</name>
<organism>
    <name type="scientific">Sus scrofa</name>
    <name type="common">Pig</name>
    <dbReference type="NCBI Taxonomy" id="9823"/>
    <lineage>
        <taxon>Eukaryota</taxon>
        <taxon>Metazoa</taxon>
        <taxon>Chordata</taxon>
        <taxon>Craniata</taxon>
        <taxon>Vertebrata</taxon>
        <taxon>Euteleostomi</taxon>
        <taxon>Mammalia</taxon>
        <taxon>Eutheria</taxon>
        <taxon>Laurasiatheria</taxon>
        <taxon>Artiodactyla</taxon>
        <taxon>Suina</taxon>
        <taxon>Suidae</taxon>
        <taxon>Sus</taxon>
    </lineage>
</organism>
<reference key="1">
    <citation type="journal article" date="2002" name="Anim. Genet.">
        <title>Linkage and cytogenetic mapping of the BCL9 gene to porcine chromosome 4.</title>
        <authorList>
            <person name="Knoll A."/>
            <person name="Dvorak J."/>
            <person name="Rohrer G.A."/>
            <person name="Cepica S."/>
        </authorList>
    </citation>
    <scope>NUCLEOTIDE SEQUENCE [GENOMIC DNA]</scope>
</reference>
<dbReference type="EMBL" id="AJ416471">
    <property type="protein sequence ID" value="CAC94924.1"/>
    <property type="molecule type" value="Genomic_DNA"/>
</dbReference>
<dbReference type="STRING" id="9823.ENSSSCP00000037049"/>
<dbReference type="PaxDb" id="9823-ENSSSCP00000007142"/>
<dbReference type="eggNOG" id="ENOG502QREN">
    <property type="taxonomic scope" value="Eukaryota"/>
</dbReference>
<dbReference type="HOGENOM" id="CLU_004930_1_0_1"/>
<dbReference type="InParanoid" id="Q95KQ6"/>
<dbReference type="Proteomes" id="UP000008227">
    <property type="component" value="Unplaced"/>
</dbReference>
<dbReference type="Proteomes" id="UP000314985">
    <property type="component" value="Unplaced"/>
</dbReference>
<dbReference type="Proteomes" id="UP000694570">
    <property type="component" value="Unplaced"/>
</dbReference>
<dbReference type="Proteomes" id="UP000694571">
    <property type="component" value="Unplaced"/>
</dbReference>
<dbReference type="Proteomes" id="UP000694720">
    <property type="component" value="Unplaced"/>
</dbReference>
<dbReference type="Proteomes" id="UP000694722">
    <property type="component" value="Unplaced"/>
</dbReference>
<dbReference type="Proteomes" id="UP000694723">
    <property type="component" value="Unplaced"/>
</dbReference>
<dbReference type="Proteomes" id="UP000694724">
    <property type="component" value="Unplaced"/>
</dbReference>
<dbReference type="Proteomes" id="UP000694725">
    <property type="component" value="Unplaced"/>
</dbReference>
<dbReference type="Proteomes" id="UP000694726">
    <property type="component" value="Unplaced"/>
</dbReference>
<dbReference type="Proteomes" id="UP000694727">
    <property type="component" value="Unplaced"/>
</dbReference>
<dbReference type="Proteomes" id="UP000694728">
    <property type="component" value="Unplaced"/>
</dbReference>
<dbReference type="GO" id="GO:0005634">
    <property type="term" value="C:nucleus"/>
    <property type="evidence" value="ECO:0007669"/>
    <property type="project" value="UniProtKB-SubCell"/>
</dbReference>
<dbReference type="GO" id="GO:0008013">
    <property type="term" value="F:beta-catenin binding"/>
    <property type="evidence" value="ECO:0007669"/>
    <property type="project" value="InterPro"/>
</dbReference>
<dbReference type="GO" id="GO:0003713">
    <property type="term" value="F:transcription coactivator activity"/>
    <property type="evidence" value="ECO:0007669"/>
    <property type="project" value="InterPro"/>
</dbReference>
<dbReference type="GO" id="GO:0060070">
    <property type="term" value="P:canonical Wnt signaling pathway"/>
    <property type="evidence" value="ECO:0007669"/>
    <property type="project" value="InterPro"/>
</dbReference>
<dbReference type="InterPro" id="IPR015668">
    <property type="entry name" value="Bcl-9/Bcl-9l"/>
</dbReference>
<dbReference type="PANTHER" id="PTHR15185:SF5">
    <property type="entry name" value="B-CELL CLL_LYMPHOMA 9 PROTEIN"/>
    <property type="match status" value="1"/>
</dbReference>
<dbReference type="PANTHER" id="PTHR15185">
    <property type="entry name" value="BCL9"/>
    <property type="match status" value="1"/>
</dbReference>
<accession>Q95KQ6</accession>